<comment type="subcellular location">
    <subcellularLocation>
        <location evidence="1">Chromosome</location>
        <location evidence="1">Centromere</location>
        <location evidence="1">Kinetochore</location>
    </subcellularLocation>
</comment>
<comment type="similarity">
    <text evidence="5">Belongs to the GPATCH11 family.</text>
</comment>
<comment type="sequence caution" evidence="5">
    <conflict type="erroneous initiation">
        <sequence resource="EMBL-CDS" id="AAH47998"/>
    </conflict>
    <text>Extended N-terminus.</text>
</comment>
<comment type="sequence caution" evidence="5">
    <conflict type="erroneous initiation">
        <sequence resource="EMBL-CDS" id="AAH92522"/>
    </conflict>
    <text>Extended N-terminus.</text>
</comment>
<comment type="sequence caution" evidence="5">
    <conflict type="erroneous initiation">
        <sequence resource="EMBL-CDS" id="AAI38311"/>
    </conflict>
    <text>Extended N-terminus.</text>
</comment>
<comment type="sequence caution" evidence="5">
    <conflict type="erroneous initiation">
        <sequence resource="EMBL-CDS" id="BAE28486"/>
    </conflict>
    <text>Extended N-terminus.</text>
</comment>
<accession>Q3UFS4</accession>
<accession>B9EHQ5</accession>
<accession>Q05BG4</accession>
<accession>Q569F3</accession>
<feature type="chain" id="PRO_0000279753" description="G patch domain-containing protein 11">
    <location>
        <begin position="1"/>
        <end position="262"/>
    </location>
</feature>
<feature type="domain" description="G-patch" evidence="3">
    <location>
        <begin position="69"/>
        <end position="115"/>
    </location>
</feature>
<feature type="region of interest" description="Disordered" evidence="4">
    <location>
        <begin position="1"/>
        <end position="60"/>
    </location>
</feature>
<feature type="region of interest" description="Disordered" evidence="4">
    <location>
        <begin position="189"/>
        <end position="216"/>
    </location>
</feature>
<feature type="coiled-coil region" evidence="2">
    <location>
        <begin position="28"/>
        <end position="61"/>
    </location>
</feature>
<feature type="compositionally biased region" description="Basic and acidic residues" evidence="4">
    <location>
        <begin position="28"/>
        <end position="39"/>
    </location>
</feature>
<feature type="compositionally biased region" description="Basic and acidic residues" evidence="4">
    <location>
        <begin position="50"/>
        <end position="60"/>
    </location>
</feature>
<feature type="compositionally biased region" description="Acidic residues" evidence="4">
    <location>
        <begin position="192"/>
        <end position="213"/>
    </location>
</feature>
<feature type="modified residue" description="Phosphoserine" evidence="1">
    <location>
        <position position="115"/>
    </location>
</feature>
<feature type="sequence conflict" description="In Ref. 2; AAH92522." evidence="5" ref="2">
    <location>
        <begin position="200"/>
        <end position="201"/>
    </location>
</feature>
<feature type="sequence conflict" description="In Ref. 2; AAH47998." evidence="5" ref="2">
    <original>E</original>
    <variation>K</variation>
    <location>
        <position position="247"/>
    </location>
</feature>
<evidence type="ECO:0000250" key="1">
    <source>
        <dbReference type="UniProtKB" id="Q8N954"/>
    </source>
</evidence>
<evidence type="ECO:0000255" key="2"/>
<evidence type="ECO:0000255" key="3">
    <source>
        <dbReference type="PROSITE-ProRule" id="PRU00092"/>
    </source>
</evidence>
<evidence type="ECO:0000256" key="4">
    <source>
        <dbReference type="SAM" id="MobiDB-lite"/>
    </source>
</evidence>
<evidence type="ECO:0000305" key="5"/>
<protein>
    <recommendedName>
        <fullName>G patch domain-containing protein 11</fullName>
    </recommendedName>
    <alternativeName>
        <fullName>Coiled-coil domain-containing protein 75</fullName>
    </alternativeName>
</protein>
<proteinExistence type="evidence at protein level"/>
<dbReference type="EMBL" id="AK148331">
    <property type="protein sequence ID" value="BAE28486.1"/>
    <property type="status" value="ALT_INIT"/>
    <property type="molecule type" value="mRNA"/>
</dbReference>
<dbReference type="EMBL" id="BC047998">
    <property type="protein sequence ID" value="AAH47998.1"/>
    <property type="status" value="ALT_INIT"/>
    <property type="molecule type" value="mRNA"/>
</dbReference>
<dbReference type="EMBL" id="BC092522">
    <property type="protein sequence ID" value="AAH92522.1"/>
    <property type="status" value="ALT_INIT"/>
    <property type="molecule type" value="mRNA"/>
</dbReference>
<dbReference type="EMBL" id="BC138310">
    <property type="protein sequence ID" value="AAI38311.1"/>
    <property type="status" value="ALT_INIT"/>
    <property type="molecule type" value="mRNA"/>
</dbReference>
<dbReference type="RefSeq" id="NP_857632.4">
    <property type="nucleotide sequence ID" value="NM_181649.6"/>
</dbReference>
<dbReference type="RefSeq" id="XP_006524686.1">
    <property type="nucleotide sequence ID" value="XM_006524623.3"/>
</dbReference>
<dbReference type="FunCoup" id="Q3UFS4">
    <property type="interactions" value="390"/>
</dbReference>
<dbReference type="STRING" id="10090.ENSMUSP00000126814"/>
<dbReference type="GlyGen" id="Q3UFS4">
    <property type="glycosylation" value="1 site"/>
</dbReference>
<dbReference type="iPTMnet" id="Q3UFS4"/>
<dbReference type="PhosphoSitePlus" id="Q3UFS4"/>
<dbReference type="PaxDb" id="10090-ENSMUSP00000126814"/>
<dbReference type="PeptideAtlas" id="Q3UFS4"/>
<dbReference type="ProteomicsDB" id="271154"/>
<dbReference type="Pumba" id="Q3UFS4"/>
<dbReference type="DNASU" id="53951"/>
<dbReference type="GeneID" id="53951"/>
<dbReference type="KEGG" id="mmu:53951"/>
<dbReference type="UCSC" id="uc008dpf.2">
    <property type="organism name" value="mouse"/>
</dbReference>
<dbReference type="AGR" id="MGI:1858435"/>
<dbReference type="CTD" id="253635"/>
<dbReference type="MGI" id="MGI:1858435">
    <property type="gene designation" value="Gpatch11"/>
</dbReference>
<dbReference type="eggNOG" id="KOG1994">
    <property type="taxonomic scope" value="Eukaryota"/>
</dbReference>
<dbReference type="InParanoid" id="Q3UFS4"/>
<dbReference type="OrthoDB" id="786951at2759"/>
<dbReference type="PhylomeDB" id="Q3UFS4"/>
<dbReference type="TreeFam" id="TF313583"/>
<dbReference type="BioGRID-ORCS" id="53951">
    <property type="hits" value="2 hits in 77 CRISPR screens"/>
</dbReference>
<dbReference type="PRO" id="PR:Q3UFS4"/>
<dbReference type="Proteomes" id="UP000000589">
    <property type="component" value="Unplaced"/>
</dbReference>
<dbReference type="RNAct" id="Q3UFS4">
    <property type="molecule type" value="protein"/>
</dbReference>
<dbReference type="GO" id="GO:0000776">
    <property type="term" value="C:kinetochore"/>
    <property type="evidence" value="ECO:0000250"/>
    <property type="project" value="UniProtKB"/>
</dbReference>
<dbReference type="GO" id="GO:0003676">
    <property type="term" value="F:nucleic acid binding"/>
    <property type="evidence" value="ECO:0007669"/>
    <property type="project" value="InterPro"/>
</dbReference>
<dbReference type="InterPro" id="IPR025239">
    <property type="entry name" value="DUF4187"/>
</dbReference>
<dbReference type="InterPro" id="IPR000467">
    <property type="entry name" value="G_patch_dom"/>
</dbReference>
<dbReference type="InterPro" id="IPR039249">
    <property type="entry name" value="GPATCH11"/>
</dbReference>
<dbReference type="PANTHER" id="PTHR21032">
    <property type="entry name" value="G PATCH DOMAIN-CONTAINING PROTEIN 11"/>
    <property type="match status" value="1"/>
</dbReference>
<dbReference type="PANTHER" id="PTHR21032:SF0">
    <property type="entry name" value="G PATCH DOMAIN-CONTAINING PROTEIN 11"/>
    <property type="match status" value="1"/>
</dbReference>
<dbReference type="Pfam" id="PF13821">
    <property type="entry name" value="DUF4187"/>
    <property type="match status" value="1"/>
</dbReference>
<dbReference type="Pfam" id="PF01585">
    <property type="entry name" value="G-patch"/>
    <property type="match status" value="1"/>
</dbReference>
<dbReference type="SMART" id="SM01173">
    <property type="entry name" value="DUF4187"/>
    <property type="match status" value="1"/>
</dbReference>
<dbReference type="SMART" id="SM00443">
    <property type="entry name" value="G_patch"/>
    <property type="match status" value="1"/>
</dbReference>
<dbReference type="PROSITE" id="PS50174">
    <property type="entry name" value="G_PATCH"/>
    <property type="match status" value="1"/>
</dbReference>
<organism>
    <name type="scientific">Mus musculus</name>
    <name type="common">Mouse</name>
    <dbReference type="NCBI Taxonomy" id="10090"/>
    <lineage>
        <taxon>Eukaryota</taxon>
        <taxon>Metazoa</taxon>
        <taxon>Chordata</taxon>
        <taxon>Craniata</taxon>
        <taxon>Vertebrata</taxon>
        <taxon>Euteleostomi</taxon>
        <taxon>Mammalia</taxon>
        <taxon>Eutheria</taxon>
        <taxon>Euarchontoglires</taxon>
        <taxon>Glires</taxon>
        <taxon>Rodentia</taxon>
        <taxon>Myomorpha</taxon>
        <taxon>Muroidea</taxon>
        <taxon>Muridae</taxon>
        <taxon>Murinae</taxon>
        <taxon>Mus</taxon>
        <taxon>Mus</taxon>
    </lineage>
</organism>
<gene>
    <name type="primary">Gpatch11</name>
    <name type="synonym">Ccdc75</name>
</gene>
<keyword id="KW-0137">Centromere</keyword>
<keyword id="KW-0158">Chromosome</keyword>
<keyword id="KW-0175">Coiled coil</keyword>
<keyword id="KW-0995">Kinetochore</keyword>
<keyword id="KW-0597">Phosphoprotein</keyword>
<keyword id="KW-1185">Reference proteome</keyword>
<name>GPT11_MOUSE</name>
<sequence>MTEEEDYMSDSFINVQEDVRPGVPMLRQIREARRKEEKQQQANLRNRQKSVKEEERERRDIGLKNALGCENKGFALLQKMGYKSGQALGKSGDGIVEPIPLNVKTGKSGIGHESSLKRKAEERLENYRRKIHMKNQNEAKAAEEFRMRLKSKQDEMRLEGDLRRSQRACQQLDAQKNIQVPREAWYWLRPEEETEEEEEEEEKEEQDEDECPSEDLSVLEKLQILTGYLREEHLYCIWCGTAYEDKEDLSSNCPGPTSADHD</sequence>
<reference key="1">
    <citation type="journal article" date="2005" name="Science">
        <title>The transcriptional landscape of the mammalian genome.</title>
        <authorList>
            <person name="Carninci P."/>
            <person name="Kasukawa T."/>
            <person name="Katayama S."/>
            <person name="Gough J."/>
            <person name="Frith M.C."/>
            <person name="Maeda N."/>
            <person name="Oyama R."/>
            <person name="Ravasi T."/>
            <person name="Lenhard B."/>
            <person name="Wells C."/>
            <person name="Kodzius R."/>
            <person name="Shimokawa K."/>
            <person name="Bajic V.B."/>
            <person name="Brenner S.E."/>
            <person name="Batalov S."/>
            <person name="Forrest A.R."/>
            <person name="Zavolan M."/>
            <person name="Davis M.J."/>
            <person name="Wilming L.G."/>
            <person name="Aidinis V."/>
            <person name="Allen J.E."/>
            <person name="Ambesi-Impiombato A."/>
            <person name="Apweiler R."/>
            <person name="Aturaliya R.N."/>
            <person name="Bailey T.L."/>
            <person name="Bansal M."/>
            <person name="Baxter L."/>
            <person name="Beisel K.W."/>
            <person name="Bersano T."/>
            <person name="Bono H."/>
            <person name="Chalk A.M."/>
            <person name="Chiu K.P."/>
            <person name="Choudhary V."/>
            <person name="Christoffels A."/>
            <person name="Clutterbuck D.R."/>
            <person name="Crowe M.L."/>
            <person name="Dalla E."/>
            <person name="Dalrymple B.P."/>
            <person name="de Bono B."/>
            <person name="Della Gatta G."/>
            <person name="di Bernardo D."/>
            <person name="Down T."/>
            <person name="Engstrom P."/>
            <person name="Fagiolini M."/>
            <person name="Faulkner G."/>
            <person name="Fletcher C.F."/>
            <person name="Fukushima T."/>
            <person name="Furuno M."/>
            <person name="Futaki S."/>
            <person name="Gariboldi M."/>
            <person name="Georgii-Hemming P."/>
            <person name="Gingeras T.R."/>
            <person name="Gojobori T."/>
            <person name="Green R.E."/>
            <person name="Gustincich S."/>
            <person name="Harbers M."/>
            <person name="Hayashi Y."/>
            <person name="Hensch T.K."/>
            <person name="Hirokawa N."/>
            <person name="Hill D."/>
            <person name="Huminiecki L."/>
            <person name="Iacono M."/>
            <person name="Ikeo K."/>
            <person name="Iwama A."/>
            <person name="Ishikawa T."/>
            <person name="Jakt M."/>
            <person name="Kanapin A."/>
            <person name="Katoh M."/>
            <person name="Kawasawa Y."/>
            <person name="Kelso J."/>
            <person name="Kitamura H."/>
            <person name="Kitano H."/>
            <person name="Kollias G."/>
            <person name="Krishnan S.P."/>
            <person name="Kruger A."/>
            <person name="Kummerfeld S.K."/>
            <person name="Kurochkin I.V."/>
            <person name="Lareau L.F."/>
            <person name="Lazarevic D."/>
            <person name="Lipovich L."/>
            <person name="Liu J."/>
            <person name="Liuni S."/>
            <person name="McWilliam S."/>
            <person name="Madan Babu M."/>
            <person name="Madera M."/>
            <person name="Marchionni L."/>
            <person name="Matsuda H."/>
            <person name="Matsuzawa S."/>
            <person name="Miki H."/>
            <person name="Mignone F."/>
            <person name="Miyake S."/>
            <person name="Morris K."/>
            <person name="Mottagui-Tabar S."/>
            <person name="Mulder N."/>
            <person name="Nakano N."/>
            <person name="Nakauchi H."/>
            <person name="Ng P."/>
            <person name="Nilsson R."/>
            <person name="Nishiguchi S."/>
            <person name="Nishikawa S."/>
            <person name="Nori F."/>
            <person name="Ohara O."/>
            <person name="Okazaki Y."/>
            <person name="Orlando V."/>
            <person name="Pang K.C."/>
            <person name="Pavan W.J."/>
            <person name="Pavesi G."/>
            <person name="Pesole G."/>
            <person name="Petrovsky N."/>
            <person name="Piazza S."/>
            <person name="Reed J."/>
            <person name="Reid J.F."/>
            <person name="Ring B.Z."/>
            <person name="Ringwald M."/>
            <person name="Rost B."/>
            <person name="Ruan Y."/>
            <person name="Salzberg S.L."/>
            <person name="Sandelin A."/>
            <person name="Schneider C."/>
            <person name="Schoenbach C."/>
            <person name="Sekiguchi K."/>
            <person name="Semple C.A."/>
            <person name="Seno S."/>
            <person name="Sessa L."/>
            <person name="Sheng Y."/>
            <person name="Shibata Y."/>
            <person name="Shimada H."/>
            <person name="Shimada K."/>
            <person name="Silva D."/>
            <person name="Sinclair B."/>
            <person name="Sperling S."/>
            <person name="Stupka E."/>
            <person name="Sugiura K."/>
            <person name="Sultana R."/>
            <person name="Takenaka Y."/>
            <person name="Taki K."/>
            <person name="Tammoja K."/>
            <person name="Tan S.L."/>
            <person name="Tang S."/>
            <person name="Taylor M.S."/>
            <person name="Tegner J."/>
            <person name="Teichmann S.A."/>
            <person name="Ueda H.R."/>
            <person name="van Nimwegen E."/>
            <person name="Verardo R."/>
            <person name="Wei C.L."/>
            <person name="Yagi K."/>
            <person name="Yamanishi H."/>
            <person name="Zabarovsky E."/>
            <person name="Zhu S."/>
            <person name="Zimmer A."/>
            <person name="Hide W."/>
            <person name="Bult C."/>
            <person name="Grimmond S.M."/>
            <person name="Teasdale R.D."/>
            <person name="Liu E.T."/>
            <person name="Brusic V."/>
            <person name="Quackenbush J."/>
            <person name="Wahlestedt C."/>
            <person name="Mattick J.S."/>
            <person name="Hume D.A."/>
            <person name="Kai C."/>
            <person name="Sasaki D."/>
            <person name="Tomaru Y."/>
            <person name="Fukuda S."/>
            <person name="Kanamori-Katayama M."/>
            <person name="Suzuki M."/>
            <person name="Aoki J."/>
            <person name="Arakawa T."/>
            <person name="Iida J."/>
            <person name="Imamura K."/>
            <person name="Itoh M."/>
            <person name="Kato T."/>
            <person name="Kawaji H."/>
            <person name="Kawagashira N."/>
            <person name="Kawashima T."/>
            <person name="Kojima M."/>
            <person name="Kondo S."/>
            <person name="Konno H."/>
            <person name="Nakano K."/>
            <person name="Ninomiya N."/>
            <person name="Nishio T."/>
            <person name="Okada M."/>
            <person name="Plessy C."/>
            <person name="Shibata K."/>
            <person name="Shiraki T."/>
            <person name="Suzuki S."/>
            <person name="Tagami M."/>
            <person name="Waki K."/>
            <person name="Watahiki A."/>
            <person name="Okamura-Oho Y."/>
            <person name="Suzuki H."/>
            <person name="Kawai J."/>
            <person name="Hayashizaki Y."/>
        </authorList>
    </citation>
    <scope>NUCLEOTIDE SEQUENCE [LARGE SCALE MRNA]</scope>
    <source>
        <strain>C57BL/6J</strain>
    </source>
</reference>
<reference key="2">
    <citation type="journal article" date="2004" name="Genome Res.">
        <title>The status, quality, and expansion of the NIH full-length cDNA project: the Mammalian Gene Collection (MGC).</title>
        <authorList>
            <consortium name="The MGC Project Team"/>
        </authorList>
    </citation>
    <scope>NUCLEOTIDE SEQUENCE [LARGE SCALE MRNA]</scope>
    <source>
        <strain>C57BL/6J</strain>
        <tissue>Brain</tissue>
        <tissue>Eye</tissue>
        <tissue>Limb</tissue>
    </source>
</reference>
<reference key="3">
    <citation type="journal article" date="2010" name="Cell">
        <title>A tissue-specific atlas of mouse protein phosphorylation and expression.</title>
        <authorList>
            <person name="Huttlin E.L."/>
            <person name="Jedrychowski M.P."/>
            <person name="Elias J.E."/>
            <person name="Goswami T."/>
            <person name="Rad R."/>
            <person name="Beausoleil S.A."/>
            <person name="Villen J."/>
            <person name="Haas W."/>
            <person name="Sowa M.E."/>
            <person name="Gygi S.P."/>
        </authorList>
    </citation>
    <scope>IDENTIFICATION BY MASS SPECTROMETRY [LARGE SCALE ANALYSIS]</scope>
    <source>
        <tissue>Testis</tissue>
    </source>
</reference>